<gene>
    <name type="primary">LARP6B</name>
    <name type="synonym">FIP1</name>
    <name type="ordered locus">At2g43970</name>
    <name type="ORF">F6E13.10</name>
</gene>
<protein>
    <recommendedName>
        <fullName>La-related protein 6B</fullName>
        <shortName>AtLARP6b</shortName>
    </recommendedName>
    <alternativeName>
        <fullName>VirF-interacting protein FIP1</fullName>
    </alternativeName>
</protein>
<comment type="function">
    <text evidence="1">Transcriptional regulator.</text>
</comment>
<comment type="subcellular location">
    <subcellularLocation>
        <location evidence="1">Nucleus</location>
    </subcellularLocation>
</comment>
<comment type="alternative products">
    <event type="alternative splicing"/>
    <isoform>
        <id>O80567-1</id>
        <name>1</name>
        <sequence type="displayed"/>
    </isoform>
    <isoform>
        <id>O80567-2</id>
        <name>2</name>
        <sequence type="described" ref="VSP_054176"/>
    </isoform>
    <isoform>
        <id>O80567-3</id>
        <name>3</name>
        <sequence type="described" ref="VSP_054177"/>
    </isoform>
</comment>
<comment type="sequence caution" evidence="5">
    <conflict type="erroneous initiation">
        <sequence resource="EMBL-CDS" id="AAL06505"/>
    </conflict>
    <text>Truncated N-terminus.</text>
</comment>
<evidence type="ECO:0000250" key="1"/>
<evidence type="ECO:0000255" key="2">
    <source>
        <dbReference type="PROSITE-ProRule" id="PRU00332"/>
    </source>
</evidence>
<evidence type="ECO:0000256" key="3">
    <source>
        <dbReference type="SAM" id="MobiDB-lite"/>
    </source>
</evidence>
<evidence type="ECO:0000303" key="4">
    <source>
    </source>
</evidence>
<evidence type="ECO:0000305" key="5"/>
<name>LRP6B_ARATH</name>
<organism>
    <name type="scientific">Arabidopsis thaliana</name>
    <name type="common">Mouse-ear cress</name>
    <dbReference type="NCBI Taxonomy" id="3702"/>
    <lineage>
        <taxon>Eukaryota</taxon>
        <taxon>Viridiplantae</taxon>
        <taxon>Streptophyta</taxon>
        <taxon>Embryophyta</taxon>
        <taxon>Tracheophyta</taxon>
        <taxon>Spermatophyta</taxon>
        <taxon>Magnoliopsida</taxon>
        <taxon>eudicotyledons</taxon>
        <taxon>Gunneridae</taxon>
        <taxon>Pentapetalae</taxon>
        <taxon>rosids</taxon>
        <taxon>malvids</taxon>
        <taxon>Brassicales</taxon>
        <taxon>Brassicaceae</taxon>
        <taxon>Camelineae</taxon>
        <taxon>Arabidopsis</taxon>
    </lineage>
</organism>
<dbReference type="EMBL" id="AF332565">
    <property type="protein sequence ID" value="AAK06847.1"/>
    <property type="molecule type" value="mRNA"/>
</dbReference>
<dbReference type="EMBL" id="AC004005">
    <property type="protein sequence ID" value="AAC23405.2"/>
    <property type="molecule type" value="Genomic_DNA"/>
</dbReference>
<dbReference type="EMBL" id="CP002685">
    <property type="protein sequence ID" value="AEC10356.1"/>
    <property type="molecule type" value="Genomic_DNA"/>
</dbReference>
<dbReference type="EMBL" id="CP002685">
    <property type="protein sequence ID" value="AEC10357.1"/>
    <property type="molecule type" value="Genomic_DNA"/>
</dbReference>
<dbReference type="EMBL" id="AF375410">
    <property type="protein sequence ID" value="AAK52994.1"/>
    <property type="molecule type" value="mRNA"/>
</dbReference>
<dbReference type="EMBL" id="AF367277">
    <property type="protein sequence ID" value="AAK56266.1"/>
    <property type="molecule type" value="mRNA"/>
</dbReference>
<dbReference type="EMBL" id="AF412052">
    <property type="protein sequence ID" value="AAL06505.1"/>
    <property type="status" value="ALT_INIT"/>
    <property type="molecule type" value="mRNA"/>
</dbReference>
<dbReference type="EMBL" id="AY056238">
    <property type="protein sequence ID" value="AAL07087.1"/>
    <property type="molecule type" value="mRNA"/>
</dbReference>
<dbReference type="EMBL" id="AY129474">
    <property type="protein sequence ID" value="AAM91060.1"/>
    <property type="molecule type" value="mRNA"/>
</dbReference>
<dbReference type="EMBL" id="AK319109">
    <property type="protein sequence ID" value="BAH57224.1"/>
    <property type="molecule type" value="mRNA"/>
</dbReference>
<dbReference type="PIR" id="T00677">
    <property type="entry name" value="T00677"/>
</dbReference>
<dbReference type="RefSeq" id="NP_566004.1">
    <molecule id="O80567-1"/>
    <property type="nucleotide sequence ID" value="NM_129959.3"/>
</dbReference>
<dbReference type="RefSeq" id="NP_850406.1">
    <molecule id="O80567-3"/>
    <property type="nucleotide sequence ID" value="NM_180075.2"/>
</dbReference>
<dbReference type="SMR" id="O80567"/>
<dbReference type="BioGRID" id="4338">
    <property type="interactions" value="4"/>
</dbReference>
<dbReference type="FunCoup" id="O80567">
    <property type="interactions" value="491"/>
</dbReference>
<dbReference type="IntAct" id="O80567">
    <property type="interactions" value="2"/>
</dbReference>
<dbReference type="STRING" id="3702.O80567"/>
<dbReference type="GlyGen" id="O80567">
    <property type="glycosylation" value="1 site"/>
</dbReference>
<dbReference type="iPTMnet" id="O80567"/>
<dbReference type="PaxDb" id="3702-AT2G43970.1"/>
<dbReference type="ProteomicsDB" id="238530">
    <molecule id="O80567-1"/>
</dbReference>
<dbReference type="EnsemblPlants" id="AT2G43970.1">
    <molecule id="O80567-1"/>
    <property type="protein sequence ID" value="AT2G43970.1"/>
    <property type="gene ID" value="AT2G43970"/>
</dbReference>
<dbReference type="EnsemblPlants" id="AT2G43970.2">
    <molecule id="O80567-3"/>
    <property type="protein sequence ID" value="AT2G43970.2"/>
    <property type="gene ID" value="AT2G43970"/>
</dbReference>
<dbReference type="GeneID" id="819002"/>
<dbReference type="Gramene" id="AT2G43970.1">
    <molecule id="O80567-1"/>
    <property type="protein sequence ID" value="AT2G43970.1"/>
    <property type="gene ID" value="AT2G43970"/>
</dbReference>
<dbReference type="Gramene" id="AT2G43970.2">
    <molecule id="O80567-3"/>
    <property type="protein sequence ID" value="AT2G43970.2"/>
    <property type="gene ID" value="AT2G43970"/>
</dbReference>
<dbReference type="KEGG" id="ath:AT2G43970"/>
<dbReference type="Araport" id="AT2G43970"/>
<dbReference type="TAIR" id="AT2G43970">
    <property type="gene designation" value="LARP6B"/>
</dbReference>
<dbReference type="eggNOG" id="KOG1855">
    <property type="taxonomic scope" value="Eukaryota"/>
</dbReference>
<dbReference type="HOGENOM" id="CLU_033595_1_0_1"/>
<dbReference type="InParanoid" id="O80567"/>
<dbReference type="OMA" id="FEYYPAV"/>
<dbReference type="PhylomeDB" id="O80567"/>
<dbReference type="PRO" id="PR:O80567"/>
<dbReference type="Proteomes" id="UP000006548">
    <property type="component" value="Chromosome 2"/>
</dbReference>
<dbReference type="ExpressionAtlas" id="O80567">
    <property type="expression patterns" value="baseline and differential"/>
</dbReference>
<dbReference type="GO" id="GO:0005634">
    <property type="term" value="C:nucleus"/>
    <property type="evidence" value="ECO:0007669"/>
    <property type="project" value="UniProtKB-SubCell"/>
</dbReference>
<dbReference type="GO" id="GO:1990904">
    <property type="term" value="C:ribonucleoprotein complex"/>
    <property type="evidence" value="ECO:0007669"/>
    <property type="project" value="InterPro"/>
</dbReference>
<dbReference type="GO" id="GO:0003729">
    <property type="term" value="F:mRNA binding"/>
    <property type="evidence" value="ECO:0000314"/>
    <property type="project" value="TAIR"/>
</dbReference>
<dbReference type="GO" id="GO:0006396">
    <property type="term" value="P:RNA processing"/>
    <property type="evidence" value="ECO:0007669"/>
    <property type="project" value="InterPro"/>
</dbReference>
<dbReference type="CDD" id="cd08033">
    <property type="entry name" value="LARP_6"/>
    <property type="match status" value="1"/>
</dbReference>
<dbReference type="CDD" id="cd12288">
    <property type="entry name" value="RRM_La_like_plant"/>
    <property type="match status" value="1"/>
</dbReference>
<dbReference type="FunFam" id="3.30.70.330:FF:001574">
    <property type="match status" value="1"/>
</dbReference>
<dbReference type="FunFam" id="1.10.10.10:FF:000158">
    <property type="entry name" value="La ribonucleoprotein domain family member 7"/>
    <property type="match status" value="1"/>
</dbReference>
<dbReference type="Gene3D" id="3.30.70.330">
    <property type="match status" value="1"/>
</dbReference>
<dbReference type="Gene3D" id="1.10.10.10">
    <property type="entry name" value="Winged helix-like DNA-binding domain superfamily/Winged helix DNA-binding domain"/>
    <property type="match status" value="1"/>
</dbReference>
<dbReference type="InterPro" id="IPR034878">
    <property type="entry name" value="La-rel_plant_RRM"/>
</dbReference>
<dbReference type="InterPro" id="IPR045180">
    <property type="entry name" value="La_dom_prot"/>
</dbReference>
<dbReference type="InterPro" id="IPR006630">
    <property type="entry name" value="La_HTH"/>
</dbReference>
<dbReference type="InterPro" id="IPR002344">
    <property type="entry name" value="Lupus_La"/>
</dbReference>
<dbReference type="InterPro" id="IPR012677">
    <property type="entry name" value="Nucleotide-bd_a/b_plait_sf"/>
</dbReference>
<dbReference type="InterPro" id="IPR035979">
    <property type="entry name" value="RBD_domain_sf"/>
</dbReference>
<dbReference type="InterPro" id="IPR036388">
    <property type="entry name" value="WH-like_DNA-bd_sf"/>
</dbReference>
<dbReference type="InterPro" id="IPR036390">
    <property type="entry name" value="WH_DNA-bd_sf"/>
</dbReference>
<dbReference type="PANTHER" id="PTHR22792:SF66">
    <property type="entry name" value="LA-RELATED PROTEIN 6B"/>
    <property type="match status" value="1"/>
</dbReference>
<dbReference type="PANTHER" id="PTHR22792">
    <property type="entry name" value="LUPUS LA PROTEIN-RELATED"/>
    <property type="match status" value="1"/>
</dbReference>
<dbReference type="Pfam" id="PF05383">
    <property type="entry name" value="La"/>
    <property type="match status" value="1"/>
</dbReference>
<dbReference type="PRINTS" id="PR00302">
    <property type="entry name" value="LUPUSLA"/>
</dbReference>
<dbReference type="SMART" id="SM00715">
    <property type="entry name" value="LA"/>
    <property type="match status" value="1"/>
</dbReference>
<dbReference type="SUPFAM" id="SSF54928">
    <property type="entry name" value="RNA-binding domain, RBD"/>
    <property type="match status" value="1"/>
</dbReference>
<dbReference type="SUPFAM" id="SSF46785">
    <property type="entry name" value="Winged helix' DNA-binding domain"/>
    <property type="match status" value="1"/>
</dbReference>
<dbReference type="PROSITE" id="PS50961">
    <property type="entry name" value="HTH_LA"/>
    <property type="match status" value="1"/>
</dbReference>
<sequence length="545" mass="60589">MADQQTLDSSTPPPTQSDDLSHSHSTSSTTSASSSSDPSLLRSLSLSRLNAGAPEFVPGRTTPPLPQPPRMIIPPPPPHGMLHMYHHQPPFNTPVLGPVPIQPHLVPVQNHHPHHRFHQHHHHNRHQNQQYVPVRNHGEYQQRGGVGGEQEPDLVSKKNDRRDHSKRESKNDQVTETGASVSIDSKTGLPEDSIQKIVNQVEYYFSDLNLATTDHLMRFICKDPEGYVPIHVVASFKKIKAVINNNSQLAAVLQNSAKLFVSEDGKKVRRISPITESAIEELQSRIIVAENLPEDHCYQNLMKIFSTVGSVKNIRTCQPQNNGSGAPPAARSAAKSDGTLFSNKVHAFVEYEIVELAERAVTELSEAGNWRSGLKVRLMLKHQTKEPKQGQGRGRKGHDADVEHEEDDATTSEQQPIEKQSDDCSGEWDTHMQEQPIGEDQGNEKAAGQRKGRNRGRGKGRGRGQPHQNQNQNNNHSHNQNHNHNGRGNHHHHHHHQVGTQPSNNPMNNMEQPGMGKQQPPGPRMPDGTRGFSMGRGKPVMVQAE</sequence>
<proteinExistence type="evidence at protein level"/>
<accession>O80567</accession>
<accession>C0Z3E5</accession>
<accession>F4IT26</accession>
<accession>Q945N2</accession>
<accession>Q9C5X1</accession>
<reference key="1">
    <citation type="submission" date="2000-12" db="EMBL/GenBank/DDBJ databases">
        <title>Arabidopsis thaliana VirF-interacting protein FIP1.</title>
        <authorList>
            <person name="Mayda E."/>
            <person name="Tzfira T."/>
            <person name="Citovsky V."/>
        </authorList>
    </citation>
    <scope>NUCLEOTIDE SEQUENCE [MRNA] (ISOFORM 1)</scope>
</reference>
<reference key="2">
    <citation type="journal article" date="1999" name="Nature">
        <title>Sequence and analysis of chromosome 2 of the plant Arabidopsis thaliana.</title>
        <authorList>
            <person name="Lin X."/>
            <person name="Kaul S."/>
            <person name="Rounsley S.D."/>
            <person name="Shea T.P."/>
            <person name="Benito M.-I."/>
            <person name="Town C.D."/>
            <person name="Fujii C.Y."/>
            <person name="Mason T.M."/>
            <person name="Bowman C.L."/>
            <person name="Barnstead M.E."/>
            <person name="Feldblyum T.V."/>
            <person name="Buell C.R."/>
            <person name="Ketchum K.A."/>
            <person name="Lee J.J."/>
            <person name="Ronning C.M."/>
            <person name="Koo H.L."/>
            <person name="Moffat K.S."/>
            <person name="Cronin L.A."/>
            <person name="Shen M."/>
            <person name="Pai G."/>
            <person name="Van Aken S."/>
            <person name="Umayam L."/>
            <person name="Tallon L.J."/>
            <person name="Gill J.E."/>
            <person name="Adams M.D."/>
            <person name="Carrera A.J."/>
            <person name="Creasy T.H."/>
            <person name="Goodman H.M."/>
            <person name="Somerville C.R."/>
            <person name="Copenhaver G.P."/>
            <person name="Preuss D."/>
            <person name="Nierman W.C."/>
            <person name="White O."/>
            <person name="Eisen J.A."/>
            <person name="Salzberg S.L."/>
            <person name="Fraser C.M."/>
            <person name="Venter J.C."/>
        </authorList>
    </citation>
    <scope>NUCLEOTIDE SEQUENCE [LARGE SCALE GENOMIC DNA]</scope>
    <source>
        <strain>cv. Columbia</strain>
    </source>
</reference>
<reference key="3">
    <citation type="journal article" date="2017" name="Plant J.">
        <title>Araport11: a complete reannotation of the Arabidopsis thaliana reference genome.</title>
        <authorList>
            <person name="Cheng C.Y."/>
            <person name="Krishnakumar V."/>
            <person name="Chan A.P."/>
            <person name="Thibaud-Nissen F."/>
            <person name="Schobel S."/>
            <person name="Town C.D."/>
        </authorList>
    </citation>
    <scope>GENOME REANNOTATION</scope>
    <source>
        <strain>cv. Columbia</strain>
    </source>
</reference>
<reference key="4">
    <citation type="journal article" date="2003" name="Science">
        <title>Empirical analysis of transcriptional activity in the Arabidopsis genome.</title>
        <authorList>
            <person name="Yamada K."/>
            <person name="Lim J."/>
            <person name="Dale J.M."/>
            <person name="Chen H."/>
            <person name="Shinn P."/>
            <person name="Palm C.J."/>
            <person name="Southwick A.M."/>
            <person name="Wu H.C."/>
            <person name="Kim C.J."/>
            <person name="Nguyen M."/>
            <person name="Pham P.K."/>
            <person name="Cheuk R.F."/>
            <person name="Karlin-Newmann G."/>
            <person name="Liu S.X."/>
            <person name="Lam B."/>
            <person name="Sakano H."/>
            <person name="Wu T."/>
            <person name="Yu G."/>
            <person name="Miranda M."/>
            <person name="Quach H.L."/>
            <person name="Tripp M."/>
            <person name="Chang C.H."/>
            <person name="Lee J.M."/>
            <person name="Toriumi M.J."/>
            <person name="Chan M.M."/>
            <person name="Tang C.C."/>
            <person name="Onodera C.S."/>
            <person name="Deng J.M."/>
            <person name="Akiyama K."/>
            <person name="Ansari Y."/>
            <person name="Arakawa T."/>
            <person name="Banh J."/>
            <person name="Banno F."/>
            <person name="Bowser L."/>
            <person name="Brooks S.Y."/>
            <person name="Carninci P."/>
            <person name="Chao Q."/>
            <person name="Choy N."/>
            <person name="Enju A."/>
            <person name="Goldsmith A.D."/>
            <person name="Gurjal M."/>
            <person name="Hansen N.F."/>
            <person name="Hayashizaki Y."/>
            <person name="Johnson-Hopson C."/>
            <person name="Hsuan V.W."/>
            <person name="Iida K."/>
            <person name="Karnes M."/>
            <person name="Khan S."/>
            <person name="Koesema E."/>
            <person name="Ishida J."/>
            <person name="Jiang P.X."/>
            <person name="Jones T."/>
            <person name="Kawai J."/>
            <person name="Kamiya A."/>
            <person name="Meyers C."/>
            <person name="Nakajima M."/>
            <person name="Narusaka M."/>
            <person name="Seki M."/>
            <person name="Sakurai T."/>
            <person name="Satou M."/>
            <person name="Tamse R."/>
            <person name="Vaysberg M."/>
            <person name="Wallender E.K."/>
            <person name="Wong C."/>
            <person name="Yamamura Y."/>
            <person name="Yuan S."/>
            <person name="Shinozaki K."/>
            <person name="Davis R.W."/>
            <person name="Theologis A."/>
            <person name="Ecker J.R."/>
        </authorList>
    </citation>
    <scope>NUCLEOTIDE SEQUENCE [LARGE SCALE MRNA] (ISOFORM 1)</scope>
    <source>
        <strain>cv. Columbia</strain>
    </source>
</reference>
<reference key="5">
    <citation type="journal article" date="2009" name="DNA Res.">
        <title>Analysis of multiple occurrences of alternative splicing events in Arabidopsis thaliana using novel sequenced full-length cDNAs.</title>
        <authorList>
            <person name="Iida K."/>
            <person name="Fukami-Kobayashi K."/>
            <person name="Toyoda A."/>
            <person name="Sakaki Y."/>
            <person name="Kobayashi M."/>
            <person name="Seki M."/>
            <person name="Shinozaki K."/>
        </authorList>
    </citation>
    <scope>NUCLEOTIDE SEQUENCE [LARGE SCALE MRNA] (ISOFORM 2)</scope>
    <source>
        <strain>cv. Columbia</strain>
        <tissue>Root</tissue>
    </source>
</reference>
<reference key="6">
    <citation type="journal article" date="2009" name="Plant Physiol.">
        <title>Large-scale Arabidopsis phosphoproteome profiling reveals novel chloroplast kinase substrates and phosphorylation networks.</title>
        <authorList>
            <person name="Reiland S."/>
            <person name="Messerli G."/>
            <person name="Baerenfaller K."/>
            <person name="Gerrits B."/>
            <person name="Endler A."/>
            <person name="Grossmann J."/>
            <person name="Gruissem W."/>
            <person name="Baginsky S."/>
        </authorList>
    </citation>
    <scope>IDENTIFICATION BY MASS SPECTROMETRY [LARGE SCALE ANALYSIS]</scope>
</reference>
<reference key="7">
    <citation type="journal article" date="2009" name="RNA">
        <title>A comprehensive analysis of the La-motif protein superfamily.</title>
        <authorList>
            <person name="Bousquet-Antonelli C."/>
            <person name="Deragon J.M."/>
        </authorList>
    </citation>
    <scope>GENE FAMILY</scope>
    <scope>NOMENCLATURE</scope>
</reference>
<feature type="chain" id="PRO_0000428670" description="La-related protein 6B">
    <location>
        <begin position="1"/>
        <end position="545"/>
    </location>
</feature>
<feature type="domain" description="HTH La-type RNA-binding" evidence="2">
    <location>
        <begin position="187"/>
        <end position="278"/>
    </location>
</feature>
<feature type="domain" description="RRM">
    <location>
        <begin position="285"/>
        <end position="383"/>
    </location>
</feature>
<feature type="region of interest" description="Disordered" evidence="3">
    <location>
        <begin position="1"/>
        <end position="76"/>
    </location>
</feature>
<feature type="region of interest" description="Disordered" evidence="3">
    <location>
        <begin position="105"/>
        <end position="187"/>
    </location>
</feature>
<feature type="region of interest" description="Disordered" evidence="3">
    <location>
        <begin position="382"/>
        <end position="545"/>
    </location>
</feature>
<feature type="compositionally biased region" description="Polar residues" evidence="3">
    <location>
        <begin position="1"/>
        <end position="10"/>
    </location>
</feature>
<feature type="compositionally biased region" description="Low complexity" evidence="3">
    <location>
        <begin position="23"/>
        <end position="49"/>
    </location>
</feature>
<feature type="compositionally biased region" description="Pro residues" evidence="3">
    <location>
        <begin position="61"/>
        <end position="76"/>
    </location>
</feature>
<feature type="compositionally biased region" description="Basic residues" evidence="3">
    <location>
        <begin position="111"/>
        <end position="126"/>
    </location>
</feature>
<feature type="compositionally biased region" description="Basic and acidic residues" evidence="3">
    <location>
        <begin position="154"/>
        <end position="173"/>
    </location>
</feature>
<feature type="compositionally biased region" description="Polar residues" evidence="3">
    <location>
        <begin position="174"/>
        <end position="185"/>
    </location>
</feature>
<feature type="compositionally biased region" description="Basic residues" evidence="3">
    <location>
        <begin position="448"/>
        <end position="464"/>
    </location>
</feature>
<feature type="compositionally biased region" description="Low complexity" evidence="3">
    <location>
        <begin position="465"/>
        <end position="478"/>
    </location>
</feature>
<feature type="compositionally biased region" description="Basic residues" evidence="3">
    <location>
        <begin position="479"/>
        <end position="497"/>
    </location>
</feature>
<feature type="compositionally biased region" description="Polar residues" evidence="3">
    <location>
        <begin position="498"/>
        <end position="509"/>
    </location>
</feature>
<feature type="compositionally biased region" description="Low complexity" evidence="3">
    <location>
        <begin position="510"/>
        <end position="519"/>
    </location>
</feature>
<feature type="splice variant" id="VSP_054176" description="In isoform 2." evidence="4">
    <location>
        <begin position="11"/>
        <end position="61"/>
    </location>
</feature>
<feature type="splice variant" id="VSP_054177" description="In isoform 3." evidence="5">
    <location>
        <begin position="345"/>
        <end position="360"/>
    </location>
</feature>
<feature type="sequence conflict" description="In Ref. 5; BAH57224." evidence="5" ref="5">
    <original>S</original>
    <variation>P</variation>
    <location>
        <position position="306"/>
    </location>
</feature>
<feature type="sequence conflict" description="In Ref. 5; BAH57224." evidence="5" ref="5">
    <original>Q</original>
    <variation>E</variation>
    <location>
        <position position="415"/>
    </location>
</feature>
<keyword id="KW-0025">Alternative splicing</keyword>
<keyword id="KW-0539">Nucleus</keyword>
<keyword id="KW-1185">Reference proteome</keyword>
<keyword id="KW-0694">RNA-binding</keyword>
<keyword id="KW-0804">Transcription</keyword>
<keyword id="KW-0805">Transcription regulation</keyword>